<comment type="function">
    <text evidence="3 4 6 10">Acyltransferase that catalyzes the sn-2-specific, acyl-CoA-dependent acylation of lysophosphatidic acid (LPA) to phosphatidic acid (PA) in lipid particles (PubMed:9401016). Together with ALE1, plays a central role in PA biosynthesis. PA is the intermediate, from which all glycerophospholipids are synthesized (PubMed:17890783). Can also acylate lysophosphoinositol (LPI) and lysophosphoserine (LPS) (PubMed:17675291). The fatty acyl substrates include 18:1-acyl-CoA, 14:0-acyl-CoA, 12:0-acyl-CoA and 10:0-acyl-CoA (PubMed:20694142).</text>
</comment>
<comment type="catalytic activity">
    <reaction evidence="5 9 10">
        <text>a 1-acyl-sn-glycero-3-phosphate + an acyl-CoA = a 1,2-diacyl-sn-glycero-3-phosphate + CoA</text>
        <dbReference type="Rhea" id="RHEA:19709"/>
        <dbReference type="ChEBI" id="CHEBI:57287"/>
        <dbReference type="ChEBI" id="CHEBI:57970"/>
        <dbReference type="ChEBI" id="CHEBI:58342"/>
        <dbReference type="ChEBI" id="CHEBI:58608"/>
        <dbReference type="EC" id="2.3.1.51"/>
    </reaction>
    <physiologicalReaction direction="left-to-right" evidence="9 14 16">
        <dbReference type="Rhea" id="RHEA:19710"/>
    </physiologicalReaction>
    <physiologicalReaction direction="right-to-left" evidence="9">
        <dbReference type="Rhea" id="RHEA:19711"/>
    </physiologicalReaction>
</comment>
<comment type="catalytic activity">
    <reaction evidence="9">
        <text>a 1-acyl-sn-glycero-3-phosphocholine + an acyl-CoA = a 1,2-diacyl-sn-glycero-3-phosphocholine + CoA</text>
        <dbReference type="Rhea" id="RHEA:12937"/>
        <dbReference type="ChEBI" id="CHEBI:57287"/>
        <dbReference type="ChEBI" id="CHEBI:57643"/>
        <dbReference type="ChEBI" id="CHEBI:58168"/>
        <dbReference type="ChEBI" id="CHEBI:58342"/>
        <dbReference type="EC" id="2.3.1.23"/>
    </reaction>
    <physiologicalReaction direction="left-to-right" evidence="9">
        <dbReference type="Rhea" id="RHEA:12938"/>
    </physiologicalReaction>
</comment>
<comment type="catalytic activity">
    <reaction evidence="9">
        <text>a 1-acyl-sn-glycero-3-phosphoethanolamine + an acyl-CoA = a 1,2-diacyl-sn-glycero-3-phosphoethanolamine + CoA</text>
        <dbReference type="Rhea" id="RHEA:32995"/>
        <dbReference type="ChEBI" id="CHEBI:57287"/>
        <dbReference type="ChEBI" id="CHEBI:58342"/>
        <dbReference type="ChEBI" id="CHEBI:64381"/>
        <dbReference type="ChEBI" id="CHEBI:64612"/>
        <dbReference type="EC" id="2.3.1.n7"/>
    </reaction>
    <physiologicalReaction direction="left-to-right" evidence="9">
        <dbReference type="Rhea" id="RHEA:32996"/>
    </physiologicalReaction>
    <physiologicalReaction direction="right-to-left" evidence="9">
        <dbReference type="Rhea" id="RHEA:32997"/>
    </physiologicalReaction>
</comment>
<comment type="catalytic activity">
    <reaction evidence="3">
        <text>1-hexadecanoyl-sn-glycero-3-phosphate + (9Z)-octadecenoyl-CoA = 1-hexadecanoyl-2-(9Z-octadecenoyl)-sn-glycero-3-phosphate + CoA</text>
        <dbReference type="Rhea" id="RHEA:33187"/>
        <dbReference type="ChEBI" id="CHEBI:57287"/>
        <dbReference type="ChEBI" id="CHEBI:57387"/>
        <dbReference type="ChEBI" id="CHEBI:57518"/>
        <dbReference type="ChEBI" id="CHEBI:64839"/>
    </reaction>
    <physiologicalReaction direction="left-to-right" evidence="13">
        <dbReference type="Rhea" id="RHEA:33188"/>
    </physiologicalReaction>
</comment>
<comment type="catalytic activity">
    <reaction evidence="3">
        <text>1-octadecanoyl-sn-glycero-3-phosphate + (9Z)-octadecenoyl-CoA = 1-octadecanoyl-2-(9Z-octadecenoyl)-sn-glycero-3-phosphate + CoA</text>
        <dbReference type="Rhea" id="RHEA:37163"/>
        <dbReference type="ChEBI" id="CHEBI:57287"/>
        <dbReference type="ChEBI" id="CHEBI:57387"/>
        <dbReference type="ChEBI" id="CHEBI:74560"/>
        <dbReference type="ChEBI" id="CHEBI:74565"/>
    </reaction>
    <physiologicalReaction direction="left-to-right" evidence="13">
        <dbReference type="Rhea" id="RHEA:37164"/>
    </physiologicalReaction>
</comment>
<comment type="catalytic activity">
    <reaction evidence="3">
        <text>1-(9Z-octadecenoyl)-sn-glycero-3-phospho-L-serine + (9Z)-octadecenoyl-CoA = 1,2-di-(9Z)-octadecenoyl-sn-glycero-3-phospho-L-serine + CoA</text>
        <dbReference type="Rhea" id="RHEA:37407"/>
        <dbReference type="ChEBI" id="CHEBI:57287"/>
        <dbReference type="ChEBI" id="CHEBI:57387"/>
        <dbReference type="ChEBI" id="CHEBI:74617"/>
        <dbReference type="ChEBI" id="CHEBI:74905"/>
    </reaction>
    <physiologicalReaction direction="left-to-right" evidence="13">
        <dbReference type="Rhea" id="RHEA:37408"/>
    </physiologicalReaction>
</comment>
<comment type="catalytic activity">
    <reaction evidence="3">
        <text>a 1-acyl-sn-glycero-3-phospho-(1D-myo-inositol) + (9Z)-octadecenoyl-CoA = a 1-acyl-2-(9Z-octadecenoyl)-sn-glycero-3-phospho-(1D-myo-inositol) + CoA</text>
        <dbReference type="Rhea" id="RHEA:37623"/>
        <dbReference type="ChEBI" id="CHEBI:57287"/>
        <dbReference type="ChEBI" id="CHEBI:57387"/>
        <dbReference type="ChEBI" id="CHEBI:64771"/>
        <dbReference type="ChEBI" id="CHEBI:75116"/>
    </reaction>
    <physiologicalReaction direction="left-to-right" evidence="13">
        <dbReference type="Rhea" id="RHEA:37624"/>
    </physiologicalReaction>
</comment>
<comment type="catalytic activity">
    <reaction evidence="6">
        <text>1-heptadecanoyl-sn-glycero-3-phosphate + (9Z)-octadecenoyl-CoA = 1-heptadecanoyl-2-(9Z)-octadecenoyl-sn-glycero-3-phosphate + CoA</text>
        <dbReference type="Rhea" id="RHEA:37151"/>
        <dbReference type="ChEBI" id="CHEBI:57287"/>
        <dbReference type="ChEBI" id="CHEBI:57387"/>
        <dbReference type="ChEBI" id="CHEBI:74554"/>
        <dbReference type="ChEBI" id="CHEBI:74556"/>
    </reaction>
    <physiologicalReaction direction="left-to-right" evidence="15">
        <dbReference type="Rhea" id="RHEA:37152"/>
    </physiologicalReaction>
</comment>
<comment type="catalytic activity">
    <reaction evidence="6">
        <text>1-heptadecanoyl-sn-glycero-3-phosphate + dodecanoyl-CoA = 1-heptadecanoyl-2-dodecanoyl-sn-glycero-3-phosphate + CoA</text>
        <dbReference type="Rhea" id="RHEA:44384"/>
        <dbReference type="ChEBI" id="CHEBI:57287"/>
        <dbReference type="ChEBI" id="CHEBI:57375"/>
        <dbReference type="ChEBI" id="CHEBI:74554"/>
        <dbReference type="ChEBI" id="CHEBI:84427"/>
    </reaction>
    <physiologicalReaction direction="left-to-right" evidence="15">
        <dbReference type="Rhea" id="RHEA:44385"/>
    </physiologicalReaction>
</comment>
<comment type="catalytic activity">
    <reaction evidence="6">
        <text>1-heptadecanoyl-sn-glycero-3-phosphate + tetradecanoyl-CoA = 1-heptadecanoyl-2-tetradecanoyl-sn-glycero-3-phosphate + CoA</text>
        <dbReference type="Rhea" id="RHEA:44388"/>
        <dbReference type="ChEBI" id="CHEBI:57287"/>
        <dbReference type="ChEBI" id="CHEBI:57385"/>
        <dbReference type="ChEBI" id="CHEBI:74554"/>
        <dbReference type="ChEBI" id="CHEBI:84428"/>
    </reaction>
    <physiologicalReaction direction="left-to-right" evidence="15">
        <dbReference type="Rhea" id="RHEA:44389"/>
    </physiologicalReaction>
</comment>
<comment type="pathway">
    <text>Phospholipid metabolism; CDP-diacylglycerol biosynthesis; CDP-diacylglycerol from sn-glycerol 3-phosphate: step 2/3.</text>
</comment>
<comment type="subcellular location">
    <subcellularLocation>
        <location evidence="5 7 8">Lipid droplet</location>
    </subcellularLocation>
</comment>
<comment type="domain">
    <text evidence="1">The HXXXXD motif is essential for acyltransferase activity and may constitute the binding site for the phosphate moiety of the glycerol-3-phosphate.</text>
</comment>
<comment type="similarity">
    <text evidence="12">Belongs to the 1-acyl-sn-glycerol-3-phosphate acyltransferase family.</text>
</comment>
<evidence type="ECO:0000250" key="1"/>
<evidence type="ECO:0000256" key="2">
    <source>
        <dbReference type="SAM" id="MobiDB-lite"/>
    </source>
</evidence>
<evidence type="ECO:0000269" key="3">
    <source>
    </source>
</evidence>
<evidence type="ECO:0000269" key="4">
    <source>
    </source>
</evidence>
<evidence type="ECO:0000269" key="5">
    <source>
    </source>
</evidence>
<evidence type="ECO:0000269" key="6">
    <source>
    </source>
</evidence>
<evidence type="ECO:0000269" key="7">
    <source>
    </source>
</evidence>
<evidence type="ECO:0000269" key="8">
    <source>
    </source>
</evidence>
<evidence type="ECO:0000269" key="9">
    <source>
    </source>
</evidence>
<evidence type="ECO:0000269" key="10">
    <source>
    </source>
</evidence>
<evidence type="ECO:0000303" key="11">
    <source>
    </source>
</evidence>
<evidence type="ECO:0000305" key="12"/>
<evidence type="ECO:0000305" key="13">
    <source>
    </source>
</evidence>
<evidence type="ECO:0000305" key="14">
    <source>
    </source>
</evidence>
<evidence type="ECO:0000305" key="15">
    <source>
    </source>
</evidence>
<evidence type="ECO:0000305" key="16">
    <source>
    </source>
</evidence>
<organism>
    <name type="scientific">Saccharomyces cerevisiae (strain ATCC 204508 / S288c)</name>
    <name type="common">Baker's yeast</name>
    <dbReference type="NCBI Taxonomy" id="559292"/>
    <lineage>
        <taxon>Eukaryota</taxon>
        <taxon>Fungi</taxon>
        <taxon>Dikarya</taxon>
        <taxon>Ascomycota</taxon>
        <taxon>Saccharomycotina</taxon>
        <taxon>Saccharomycetes</taxon>
        <taxon>Saccharomycetales</taxon>
        <taxon>Saccharomycetaceae</taxon>
        <taxon>Saccharomyces</taxon>
    </lineage>
</organism>
<reference key="1">
    <citation type="journal article" date="1993" name="J. Biol. Chem.">
        <title>A suppressor gene that enables Saccharomyces cerevisiae to grow without making sphingolipids encodes a protein that resembles an Escherichia coli fatty acyltransferase.</title>
        <authorList>
            <person name="Nagiec M.M."/>
            <person name="Wells G.B."/>
            <person name="Lester R.L."/>
            <person name="Dickson R.C."/>
        </authorList>
    </citation>
    <scope>NUCLEOTIDE SEQUENCE</scope>
</reference>
<reference key="2">
    <citation type="journal article" date="1997" name="Nature">
        <title>The nucleotide sequence of Saccharomyces cerevisiae chromosome IV.</title>
        <authorList>
            <person name="Jacq C."/>
            <person name="Alt-Moerbe J."/>
            <person name="Andre B."/>
            <person name="Arnold W."/>
            <person name="Bahr A."/>
            <person name="Ballesta J.P.G."/>
            <person name="Bargues M."/>
            <person name="Baron L."/>
            <person name="Becker A."/>
            <person name="Biteau N."/>
            <person name="Bloecker H."/>
            <person name="Blugeon C."/>
            <person name="Boskovic J."/>
            <person name="Brandt P."/>
            <person name="Brueckner M."/>
            <person name="Buitrago M.J."/>
            <person name="Coster F."/>
            <person name="Delaveau T."/>
            <person name="del Rey F."/>
            <person name="Dujon B."/>
            <person name="Eide L.G."/>
            <person name="Garcia-Cantalejo J.M."/>
            <person name="Goffeau A."/>
            <person name="Gomez-Peris A."/>
            <person name="Granotier C."/>
            <person name="Hanemann V."/>
            <person name="Hankeln T."/>
            <person name="Hoheisel J.D."/>
            <person name="Jaeger W."/>
            <person name="Jimenez A."/>
            <person name="Jonniaux J.-L."/>
            <person name="Kraemer C."/>
            <person name="Kuester H."/>
            <person name="Laamanen P."/>
            <person name="Legros Y."/>
            <person name="Louis E.J."/>
            <person name="Moeller-Rieker S."/>
            <person name="Monnet A."/>
            <person name="Moro M."/>
            <person name="Mueller-Auer S."/>
            <person name="Nussbaumer B."/>
            <person name="Paricio N."/>
            <person name="Paulin L."/>
            <person name="Perea J."/>
            <person name="Perez-Alonso M."/>
            <person name="Perez-Ortin J.E."/>
            <person name="Pohl T.M."/>
            <person name="Prydz H."/>
            <person name="Purnelle B."/>
            <person name="Rasmussen S.W."/>
            <person name="Remacha M.A."/>
            <person name="Revuelta J.L."/>
            <person name="Rieger M."/>
            <person name="Salom D."/>
            <person name="Saluz H.P."/>
            <person name="Saiz J.E."/>
            <person name="Saren A.-M."/>
            <person name="Schaefer M."/>
            <person name="Scharfe M."/>
            <person name="Schmidt E.R."/>
            <person name="Schneider C."/>
            <person name="Scholler P."/>
            <person name="Schwarz S."/>
            <person name="Soler-Mira A."/>
            <person name="Urrestarazu L.A."/>
            <person name="Verhasselt P."/>
            <person name="Vissers S."/>
            <person name="Voet M."/>
            <person name="Volckaert G."/>
            <person name="Wagner G."/>
            <person name="Wambutt R."/>
            <person name="Wedler E."/>
            <person name="Wedler H."/>
            <person name="Woelfl S."/>
            <person name="Harris D.E."/>
            <person name="Bowman S."/>
            <person name="Brown D."/>
            <person name="Churcher C.M."/>
            <person name="Connor R."/>
            <person name="Dedman K."/>
            <person name="Gentles S."/>
            <person name="Hamlin N."/>
            <person name="Hunt S."/>
            <person name="Jones L."/>
            <person name="McDonald S."/>
            <person name="Murphy L.D."/>
            <person name="Niblett D."/>
            <person name="Odell C."/>
            <person name="Oliver K."/>
            <person name="Rajandream M.A."/>
            <person name="Richards C."/>
            <person name="Shore L."/>
            <person name="Walsh S.V."/>
            <person name="Barrell B.G."/>
            <person name="Dietrich F.S."/>
            <person name="Mulligan J.T."/>
            <person name="Allen E."/>
            <person name="Araujo R."/>
            <person name="Aviles E."/>
            <person name="Berno A."/>
            <person name="Carpenter J."/>
            <person name="Chen E."/>
            <person name="Cherry J.M."/>
            <person name="Chung E."/>
            <person name="Duncan M."/>
            <person name="Hunicke-Smith S."/>
            <person name="Hyman R.W."/>
            <person name="Komp C."/>
            <person name="Lashkari D."/>
            <person name="Lew H."/>
            <person name="Lin D."/>
            <person name="Mosedale D."/>
            <person name="Nakahara K."/>
            <person name="Namath A."/>
            <person name="Oefner P."/>
            <person name="Oh C."/>
            <person name="Petel F.X."/>
            <person name="Roberts D."/>
            <person name="Schramm S."/>
            <person name="Schroeder M."/>
            <person name="Shogren T."/>
            <person name="Shroff N."/>
            <person name="Winant A."/>
            <person name="Yelton M.A."/>
            <person name="Botstein D."/>
            <person name="Davis R.W."/>
            <person name="Johnston M."/>
            <person name="Andrews S."/>
            <person name="Brinkman R."/>
            <person name="Cooper J."/>
            <person name="Ding H."/>
            <person name="Du Z."/>
            <person name="Favello A."/>
            <person name="Fulton L."/>
            <person name="Gattung S."/>
            <person name="Greco T."/>
            <person name="Hallsworth K."/>
            <person name="Hawkins J."/>
            <person name="Hillier L.W."/>
            <person name="Jier M."/>
            <person name="Johnson D."/>
            <person name="Johnston L."/>
            <person name="Kirsten J."/>
            <person name="Kucaba T."/>
            <person name="Langston Y."/>
            <person name="Latreille P."/>
            <person name="Le T."/>
            <person name="Mardis E."/>
            <person name="Menezes S."/>
            <person name="Miller N."/>
            <person name="Nhan M."/>
            <person name="Pauley A."/>
            <person name="Peluso D."/>
            <person name="Rifkin L."/>
            <person name="Riles L."/>
            <person name="Taich A."/>
            <person name="Trevaskis E."/>
            <person name="Vignati D."/>
            <person name="Wilcox L."/>
            <person name="Wohldman P."/>
            <person name="Vaudin M."/>
            <person name="Wilson R."/>
            <person name="Waterston R."/>
            <person name="Albermann K."/>
            <person name="Hani J."/>
            <person name="Heumann K."/>
            <person name="Kleine K."/>
            <person name="Mewes H.-W."/>
            <person name="Zollner A."/>
            <person name="Zaccaria P."/>
        </authorList>
    </citation>
    <scope>NUCLEOTIDE SEQUENCE [LARGE SCALE GENOMIC DNA]</scope>
    <source>
        <strain>ATCC 204508 / S288c</strain>
    </source>
</reference>
<reference key="3">
    <citation type="journal article" date="2014" name="G3 (Bethesda)">
        <title>The reference genome sequence of Saccharomyces cerevisiae: Then and now.</title>
        <authorList>
            <person name="Engel S.R."/>
            <person name="Dietrich F.S."/>
            <person name="Fisk D.G."/>
            <person name="Binkley G."/>
            <person name="Balakrishnan R."/>
            <person name="Costanzo M.C."/>
            <person name="Dwight S.S."/>
            <person name="Hitz B.C."/>
            <person name="Karra K."/>
            <person name="Nash R.S."/>
            <person name="Weng S."/>
            <person name="Wong E.D."/>
            <person name="Lloyd P."/>
            <person name="Skrzypek M.S."/>
            <person name="Miyasato S.R."/>
            <person name="Simison M."/>
            <person name="Cherry J.M."/>
        </authorList>
    </citation>
    <scope>GENOME REANNOTATION</scope>
    <source>
        <strain>ATCC 204508 / S288c</strain>
    </source>
</reference>
<reference key="4">
    <citation type="journal article" date="2007" name="Genome Res.">
        <title>Approaching a complete repository of sequence-verified protein-encoding clones for Saccharomyces cerevisiae.</title>
        <authorList>
            <person name="Hu Y."/>
            <person name="Rolfs A."/>
            <person name="Bhullar B."/>
            <person name="Murthy T.V.S."/>
            <person name="Zhu C."/>
            <person name="Berger M.F."/>
            <person name="Camargo A.A."/>
            <person name="Kelley F."/>
            <person name="McCarron S."/>
            <person name="Jepson D."/>
            <person name="Richardson A."/>
            <person name="Raphael J."/>
            <person name="Moreira D."/>
            <person name="Taycher E."/>
            <person name="Zuo D."/>
            <person name="Mohr S."/>
            <person name="Kane M.F."/>
            <person name="Williamson J."/>
            <person name="Simpson A.J.G."/>
            <person name="Bulyk M.L."/>
            <person name="Harlow E."/>
            <person name="Marsischky G."/>
            <person name="Kolodner R.D."/>
            <person name="LaBaer J."/>
        </authorList>
    </citation>
    <scope>NUCLEOTIDE SEQUENCE [GENOMIC DNA]</scope>
    <source>
        <strain>ATCC 204508 / S288c</strain>
    </source>
</reference>
<reference key="5">
    <citation type="journal article" date="1997" name="J. Bacteriol.">
        <title>Biosynthesis of phosphatidic acid in lipid particles and endoplasmic reticulum of Saccharomyces cerevisiae.</title>
        <authorList>
            <person name="Athenstaedt K."/>
            <person name="Daum G."/>
        </authorList>
    </citation>
    <scope>FUNCTION</scope>
    <scope>CATALYTIC ACTIVITY</scope>
    <scope>SUBCELLULAR LOCATION</scope>
</reference>
<reference key="6">
    <citation type="journal article" date="2007" name="J. Biol. Chem.">
        <title>SLC1 and SLC4 encode partially redundant acyl-coenzyme A 1-acylglycerol-3-phosphate O-acyltransferases of budding yeast.</title>
        <authorList>
            <person name="Benghezal M."/>
            <person name="Roubaty C."/>
            <person name="Veepuri V."/>
            <person name="Knudsen J."/>
            <person name="Conzelmann A."/>
        </authorList>
    </citation>
    <scope>FUNCTION</scope>
    <scope>CATALYTIC ACTIVITY</scope>
    <scope>SUBSTRATE SPECIFICITY</scope>
</reference>
<reference key="7">
    <citation type="journal article" date="2007" name="J. Biol. Chem.">
        <title>LPT1 encodes a membrane-bound O-acyltransferase involved in the acylation of lysophospholipids in the yeast Saccharomyces cerevisiae.</title>
        <authorList>
            <person name="Tamaki H."/>
            <person name="Shimada A."/>
            <person name="Itoh Y."/>
            <person name="Ohya M."/>
            <person name="Takase J."/>
            <person name="Miyashita M."/>
            <person name="Miyagawa H."/>
            <person name="Nozaki H."/>
            <person name="Nakayama R."/>
            <person name="Kumagai H."/>
        </authorList>
    </citation>
    <scope>FUNCTION</scope>
</reference>
<reference key="8">
    <citation type="journal article" date="2008" name="FEBS Lett.">
        <title>A family of eukaryotic lysophospholipid acyltransferases with broad specificity.</title>
        <authorList>
            <person name="Stahl U."/>
            <person name="Stalberg K."/>
            <person name="Stymne S."/>
            <person name="Ronne H."/>
        </authorList>
    </citation>
    <scope>CATALYTIC ACTIVITY</scope>
</reference>
<reference key="9">
    <citation type="journal article" date="2009" name="Science">
        <title>Global analysis of Cdk1 substrate phosphorylation sites provides insights into evolution.</title>
        <authorList>
            <person name="Holt L.J."/>
            <person name="Tuch B.B."/>
            <person name="Villen J."/>
            <person name="Johnson A.D."/>
            <person name="Gygi S.P."/>
            <person name="Morgan D.O."/>
        </authorList>
    </citation>
    <scope>IDENTIFICATION BY MASS SPECTROMETRY [LARGE SCALE ANALYSIS]</scope>
</reference>
<reference key="10">
    <citation type="journal article" date="2010" name="PLoS ONE">
        <title>Characterization of substrate preference for Slc1p and Cst26p in Saccharomyces cerevisiae using lipidomic approaches and an LPAAT activity assay.</title>
        <authorList>
            <person name="Shui G."/>
            <person name="Guan X.L."/>
            <person name="Gopalakrishnan P."/>
            <person name="Xue Y."/>
            <person name="Goh J.S."/>
            <person name="Yang H."/>
            <person name="Wenk M.R."/>
        </authorList>
    </citation>
    <scope>FUNCTION</scope>
    <scope>SUBSTRATE SPECIFICITY</scope>
</reference>
<reference key="11">
    <citation type="journal article" date="2011" name="Biochim. Biophys. Acta">
        <title>Lipid particles/droplets of the yeast Saccharomyces cerevisiae revisited: lipidome meets proteome.</title>
        <authorList>
            <person name="Grillitsch K."/>
            <person name="Connerth M."/>
            <person name="Kofeler H."/>
            <person name="Arrey T.N."/>
            <person name="Rietschel B."/>
            <person name="Wagner B."/>
            <person name="Karas M."/>
            <person name="Daum G."/>
        </authorList>
    </citation>
    <scope>SUBCELLULAR LOCATION</scope>
</reference>
<reference key="12">
    <citation type="journal article" date="2014" name="J. Lipid Res.">
        <title>High-confidence proteomic analysis of yeast lipid droplets identifies additional droplet proteins and reveals connections to dolichol synthesis and sterol acetylation.</title>
        <authorList>
            <person name="Currie E."/>
            <person name="Guo X."/>
            <person name="Christiano R."/>
            <person name="Chitraju C."/>
            <person name="Kory N."/>
            <person name="Harrison K."/>
            <person name="Haas J."/>
            <person name="Walther T.C."/>
            <person name="Farese R.V. Jr."/>
        </authorList>
    </citation>
    <scope>SUBCELLULAR LOCATION</scope>
</reference>
<reference key="13">
    <citation type="journal article" date="2016" name="Lipids">
        <title>Possible role of different yeast and plant lysophospholipid:acyl-CoA acyltransferases (LPLATs) in acyl remodelling of phospholipids.</title>
        <authorList>
            <person name="Jasieniecka-Gazarkiewicz K."/>
            <person name="Demski K."/>
            <person name="Lager I."/>
            <person name="Stymne S."/>
            <person name="Banas A."/>
        </authorList>
    </citation>
    <scope>CATALYTIC ACTIVITY</scope>
</reference>
<proteinExistence type="evidence at protein level"/>
<sequence length="303" mass="33887">MSVIGRFLYYLRSVLVVLALAGCGFYGVIASILCTLIGKQHLAQWITARCFYHVMKLMLGLDVKVVGEENLAKKPYIMIANHQSTLDIFMLGRIFPPGCTVTAKKSLKYVPFLGWFMALSGTYFLDRSKRQEAIDTLNKGLENVKKNKRALWVFPEGTRSYTSELTMLPFKKGAFHLAQQGKIPIVPVVVSNTSTLVSPKYGVFNRGCMIVRILKPISTENLTKDKIGEFAEKVRDQMVDTLKEIGYSPAINDTTLPPQAIEYAALQHDKKVNKKIKNEPVPSVSISNDVNTHNEGSSVKKMH</sequence>
<dbReference type="EC" id="2.3.1.23" evidence="9"/>
<dbReference type="EC" id="2.3.1.51" evidence="5 9 10"/>
<dbReference type="EC" id="2.3.1.n7" evidence="9"/>
<dbReference type="EMBL" id="L13282">
    <property type="protein sequence ID" value="AAA16514.1"/>
    <property type="molecule type" value="Unassigned_DNA"/>
</dbReference>
<dbReference type="EMBL" id="Z74100">
    <property type="protein sequence ID" value="CAA98614.1"/>
    <property type="molecule type" value="Genomic_DNA"/>
</dbReference>
<dbReference type="EMBL" id="AY692892">
    <property type="protein sequence ID" value="AAT92911.1"/>
    <property type="molecule type" value="Genomic_DNA"/>
</dbReference>
<dbReference type="EMBL" id="BK006938">
    <property type="protein sequence ID" value="DAA11804.1"/>
    <property type="molecule type" value="Genomic_DNA"/>
</dbReference>
<dbReference type="PIR" id="A48600">
    <property type="entry name" value="A48600"/>
</dbReference>
<dbReference type="RefSeq" id="NP_010231.1">
    <property type="nucleotide sequence ID" value="NM_001180111.1"/>
</dbReference>
<dbReference type="SMR" id="P33333"/>
<dbReference type="BioGRID" id="32007">
    <property type="interactions" value="137"/>
</dbReference>
<dbReference type="DIP" id="DIP-5136N"/>
<dbReference type="FunCoup" id="P33333">
    <property type="interactions" value="360"/>
</dbReference>
<dbReference type="IntAct" id="P33333">
    <property type="interactions" value="59"/>
</dbReference>
<dbReference type="MINT" id="P33333"/>
<dbReference type="STRING" id="4932.YDL052C"/>
<dbReference type="SwissLipids" id="SLP:000000049"/>
<dbReference type="iPTMnet" id="P33333"/>
<dbReference type="PaxDb" id="4932-YDL052C"/>
<dbReference type="PeptideAtlas" id="P33333"/>
<dbReference type="EnsemblFungi" id="YDL052C_mRNA">
    <property type="protein sequence ID" value="YDL052C"/>
    <property type="gene ID" value="YDL052C"/>
</dbReference>
<dbReference type="GeneID" id="851508"/>
<dbReference type="KEGG" id="sce:YDL052C"/>
<dbReference type="AGR" id="SGD:S000002210"/>
<dbReference type="SGD" id="S000002210">
    <property type="gene designation" value="SLC1"/>
</dbReference>
<dbReference type="VEuPathDB" id="FungiDB:YDL052C"/>
<dbReference type="eggNOG" id="KOG2848">
    <property type="taxonomic scope" value="Eukaryota"/>
</dbReference>
<dbReference type="GeneTree" id="ENSGT00390000008726"/>
<dbReference type="HOGENOM" id="CLU_027938_10_0_1"/>
<dbReference type="InParanoid" id="P33333"/>
<dbReference type="OMA" id="SKCTIQP"/>
<dbReference type="OrthoDB" id="202234at2759"/>
<dbReference type="BioCyc" id="MetaCyc:YDL052C-MONOMER"/>
<dbReference type="BioCyc" id="YEAST:YDL052C-MONOMER"/>
<dbReference type="BRENDA" id="2.3.1.51">
    <property type="organism ID" value="984"/>
</dbReference>
<dbReference type="Reactome" id="R-SCE-1483166">
    <property type="pathway name" value="Synthesis of PA"/>
</dbReference>
<dbReference type="Reactome" id="R-SCE-6798695">
    <property type="pathway name" value="Neutrophil degranulation"/>
</dbReference>
<dbReference type="UniPathway" id="UPA00557">
    <property type="reaction ID" value="UER00613"/>
</dbReference>
<dbReference type="BioGRID-ORCS" id="851508">
    <property type="hits" value="6 hits in 10 CRISPR screens"/>
</dbReference>
<dbReference type="PRO" id="PR:P33333"/>
<dbReference type="Proteomes" id="UP000002311">
    <property type="component" value="Chromosome IV"/>
</dbReference>
<dbReference type="RNAct" id="P33333">
    <property type="molecule type" value="protein"/>
</dbReference>
<dbReference type="GO" id="GO:0005783">
    <property type="term" value="C:endoplasmic reticulum"/>
    <property type="evidence" value="ECO:0007005"/>
    <property type="project" value="SGD"/>
</dbReference>
<dbReference type="GO" id="GO:0005811">
    <property type="term" value="C:lipid droplet"/>
    <property type="evidence" value="ECO:0000314"/>
    <property type="project" value="SGD"/>
</dbReference>
<dbReference type="GO" id="GO:0016020">
    <property type="term" value="C:membrane"/>
    <property type="evidence" value="ECO:0007669"/>
    <property type="project" value="InterPro"/>
</dbReference>
<dbReference type="GO" id="GO:0003841">
    <property type="term" value="F:1-acylglycerol-3-phosphate O-acyltransferase activity"/>
    <property type="evidence" value="ECO:0000314"/>
    <property type="project" value="SGD"/>
</dbReference>
<dbReference type="GO" id="GO:0047184">
    <property type="term" value="F:1-acylglycerophosphocholine O-acyltransferase activity"/>
    <property type="evidence" value="ECO:0007669"/>
    <property type="project" value="UniProtKB-EC"/>
</dbReference>
<dbReference type="GO" id="GO:0106262">
    <property type="term" value="F:1-acylglycerophosphoethanolamine O-acyltransferase activity"/>
    <property type="evidence" value="ECO:0007669"/>
    <property type="project" value="RHEA"/>
</dbReference>
<dbReference type="GO" id="GO:0016024">
    <property type="term" value="P:CDP-diacylglycerol biosynthetic process"/>
    <property type="evidence" value="ECO:0007669"/>
    <property type="project" value="UniProtKB-UniPathway"/>
</dbReference>
<dbReference type="GO" id="GO:0046474">
    <property type="term" value="P:glycerophospholipid biosynthetic process"/>
    <property type="evidence" value="ECO:0000316"/>
    <property type="project" value="SGD"/>
</dbReference>
<dbReference type="GO" id="GO:0006654">
    <property type="term" value="P:phosphatidic acid biosynthetic process"/>
    <property type="evidence" value="ECO:0000318"/>
    <property type="project" value="GO_Central"/>
</dbReference>
<dbReference type="CDD" id="cd07989">
    <property type="entry name" value="LPLAT_AGPAT-like"/>
    <property type="match status" value="1"/>
</dbReference>
<dbReference type="InterPro" id="IPR004552">
    <property type="entry name" value="AGP_acyltrans"/>
</dbReference>
<dbReference type="InterPro" id="IPR002123">
    <property type="entry name" value="Plipid/glycerol_acylTrfase"/>
</dbReference>
<dbReference type="NCBIfam" id="TIGR00530">
    <property type="entry name" value="AGP_acyltrn"/>
    <property type="match status" value="1"/>
</dbReference>
<dbReference type="PANTHER" id="PTHR10434">
    <property type="entry name" value="1-ACYL-SN-GLYCEROL-3-PHOSPHATE ACYLTRANSFERASE"/>
    <property type="match status" value="1"/>
</dbReference>
<dbReference type="PANTHER" id="PTHR10434:SF11">
    <property type="entry name" value="1-ACYL-SN-GLYCEROL-3-PHOSPHATE ACYLTRANSFERASE"/>
    <property type="match status" value="1"/>
</dbReference>
<dbReference type="Pfam" id="PF01553">
    <property type="entry name" value="Acyltransferase"/>
    <property type="match status" value="1"/>
</dbReference>
<dbReference type="SMART" id="SM00563">
    <property type="entry name" value="PlsC"/>
    <property type="match status" value="1"/>
</dbReference>
<dbReference type="SUPFAM" id="SSF69593">
    <property type="entry name" value="Glycerol-3-phosphate (1)-acyltransferase"/>
    <property type="match status" value="1"/>
</dbReference>
<name>PLSC_YEAST</name>
<feature type="chain" id="PRO_0000208189" description="1-acyl-sn-glycerol-3-phosphate acyltransferase">
    <location>
        <begin position="1"/>
        <end position="303"/>
    </location>
</feature>
<feature type="region of interest" description="Disordered" evidence="2">
    <location>
        <begin position="278"/>
        <end position="303"/>
    </location>
</feature>
<feature type="short sequence motif" description="HXXXXD motif">
    <location>
        <begin position="82"/>
        <end position="87"/>
    </location>
</feature>
<feature type="compositionally biased region" description="Polar residues" evidence="2">
    <location>
        <begin position="284"/>
        <end position="297"/>
    </location>
</feature>
<feature type="sequence variant" description="In allele suppressor SLC1-1.">
    <original>Q</original>
    <variation>L</variation>
    <location>
        <position position="44"/>
    </location>
</feature>
<feature type="sequence conflict" description="In Ref. 4; AAT92911." evidence="12" ref="4">
    <original>W</original>
    <variation>R</variation>
    <location>
        <position position="115"/>
    </location>
</feature>
<keyword id="KW-0012">Acyltransferase</keyword>
<keyword id="KW-0444">Lipid biosynthesis</keyword>
<keyword id="KW-0551">Lipid droplet</keyword>
<keyword id="KW-0443">Lipid metabolism</keyword>
<keyword id="KW-0594">Phospholipid biosynthesis</keyword>
<keyword id="KW-1208">Phospholipid metabolism</keyword>
<keyword id="KW-1185">Reference proteome</keyword>
<keyword id="KW-0808">Transferase</keyword>
<accession>P33333</accession>
<accession>D6VRU4</accession>
<accession>E9P8Y5</accession>
<gene>
    <name evidence="11" type="primary">SLC1</name>
    <name type="ordered locus">YDL052C</name>
</gene>
<protein>
    <recommendedName>
        <fullName>1-acyl-sn-glycerol-3-phosphate acyltransferase</fullName>
        <shortName>1-AGP acyltransferase</shortName>
        <shortName>1-AGPAT</shortName>
        <ecNumber evidence="9">2.3.1.23</ecNumber>
        <ecNumber evidence="5 9 10">2.3.1.51</ecNumber>
        <ecNumber evidence="9">2.3.1.n7</ecNumber>
    </recommendedName>
    <alternativeName>
        <fullName>Lysophosphatidic acid acyltransferase</fullName>
        <shortName>LPAAT</shortName>
    </alternativeName>
    <alternativeName>
        <fullName evidence="11">Sphingolipid compensation protein 1</fullName>
    </alternativeName>
</protein>